<keyword id="KW-0046">Antibiotic resistance</keyword>
<keyword id="KW-0067">ATP-binding</keyword>
<keyword id="KW-0997">Cell inner membrane</keyword>
<keyword id="KW-1003">Cell membrane</keyword>
<keyword id="KW-0472">Membrane</keyword>
<keyword id="KW-0547">Nucleotide-binding</keyword>
<keyword id="KW-1185">Reference proteome</keyword>
<keyword id="KW-1278">Translocase</keyword>
<keyword id="KW-0812">Transmembrane</keyword>
<keyword id="KW-1133">Transmembrane helix</keyword>
<keyword id="KW-0813">Transport</keyword>
<organism>
    <name type="scientific">Nitrosomonas europaea (strain ATCC 19718 / CIP 103999 / KCTC 2705 / NBRC 14298)</name>
    <dbReference type="NCBI Taxonomy" id="228410"/>
    <lineage>
        <taxon>Bacteria</taxon>
        <taxon>Pseudomonadati</taxon>
        <taxon>Pseudomonadota</taxon>
        <taxon>Betaproteobacteria</taxon>
        <taxon>Nitrosomonadales</taxon>
        <taxon>Nitrosomonadaceae</taxon>
        <taxon>Nitrosomonas</taxon>
    </lineage>
</organism>
<proteinExistence type="inferred from homology"/>
<feature type="chain" id="PRO_0000269952" description="Macrolide export ATP-binding/permease protein MacB">
    <location>
        <begin position="1"/>
        <end position="659"/>
    </location>
</feature>
<feature type="transmembrane region" description="Helical" evidence="1">
    <location>
        <begin position="287"/>
        <end position="307"/>
    </location>
</feature>
<feature type="transmembrane region" description="Helical" evidence="1">
    <location>
        <begin position="538"/>
        <end position="558"/>
    </location>
</feature>
<feature type="transmembrane region" description="Helical" evidence="1">
    <location>
        <begin position="594"/>
        <end position="614"/>
    </location>
</feature>
<feature type="transmembrane region" description="Helical" evidence="1">
    <location>
        <begin position="619"/>
        <end position="639"/>
    </location>
</feature>
<feature type="domain" description="ABC transporter" evidence="1">
    <location>
        <begin position="10"/>
        <end position="249"/>
    </location>
</feature>
<feature type="binding site" evidence="1">
    <location>
        <begin position="47"/>
        <end position="54"/>
    </location>
    <ligand>
        <name>ATP</name>
        <dbReference type="ChEBI" id="CHEBI:30616"/>
    </ligand>
</feature>
<accession>Q82VK1</accession>
<reference key="1">
    <citation type="journal article" date="2003" name="J. Bacteriol.">
        <title>Complete genome sequence of the ammonia-oxidizing bacterium and obligate chemolithoautotroph Nitrosomonas europaea.</title>
        <authorList>
            <person name="Chain P."/>
            <person name="Lamerdin J.E."/>
            <person name="Larimer F.W."/>
            <person name="Regala W."/>
            <person name="Lao V."/>
            <person name="Land M.L."/>
            <person name="Hauser L."/>
            <person name="Hooper A.B."/>
            <person name="Klotz M.G."/>
            <person name="Norton J."/>
            <person name="Sayavedra-Soto L.A."/>
            <person name="Arciero D.M."/>
            <person name="Hommes N.G."/>
            <person name="Whittaker M.M."/>
            <person name="Arp D.J."/>
        </authorList>
    </citation>
    <scope>NUCLEOTIDE SEQUENCE [LARGE SCALE GENOMIC DNA]</scope>
    <source>
        <strain>ATCC 19718 / CIP 103999 / KCTC 2705 / NBRC 14298</strain>
    </source>
</reference>
<name>MACB_NITEU</name>
<gene>
    <name evidence="1" type="primary">macB</name>
    <name type="ordered locus">NE1081</name>
</gene>
<sequence length="659" mass="72075">MVSTDLPPLIELRGIRKRYGGGDKPEVEVLHGIDLDIRAGEFIAIVGSSGSGKSTLMHLLGCLDRPSSGSYRFAGEDVSTFGSDELAWLRRKAFGFVFQGYHLIPTESARENVEIPAIYAGLPPGERMQRAADLLGRLGLSDKLNNRPNQLSGGQQQRVSIARALMNGGHIILADEPTGALDSRSGAEVMELLRELAGAGHTVILITHDRDVAAQAQRVVEIRDGRIVADSVTDRQPSEQPLLHHAGLSSLEMTQAHEDTGTPFWQGLHETIRAAWRVMWIHRVRTSLTLLGIVIGVASVIVMLAIGEGTKQRVIDQMGSMGTTIMYMSSDVPSTGGPVGVITEEDLDEVARLPEISRVMPVIGDPILVRHQNVDKQIYVFSSPYIMPMVHHWRVAQGRFFTETEDRELAPVVVLGHKIYRSFFPHLSNPVGQYLLIGTSPFEVIGVMAERGAESGSQNYDDMVFIPYRAGRARVYQAQEQPDYIVMEAASMDQVQEAEEAIRALLLERHGREDFRIGNAAARLKTQLETRDTMTRMLGLVAAVSLLVGGIGVMNVMLMTVRERTREIGIRMATGAREYDILSQFLIEAMLVTITGGTVGVILGLTVGALLVFWEVPVVFSFGVMIGAFACAVITGLIFGYMPARTAARLDPVVALSSE</sequence>
<evidence type="ECO:0000255" key="1">
    <source>
        <dbReference type="HAMAP-Rule" id="MF_01720"/>
    </source>
</evidence>
<comment type="function">
    <text evidence="1">Non-canonical ABC transporter that contains transmembrane domains (TMD), which form a pore in the inner membrane, and an ATP-binding domain (NBD), which is responsible for energy generation. Confers resistance against macrolides.</text>
</comment>
<comment type="subunit">
    <text evidence="1">Homodimer.</text>
</comment>
<comment type="subcellular location">
    <subcellularLocation>
        <location evidence="1">Cell inner membrane</location>
        <topology evidence="1">Multi-pass membrane protein</topology>
    </subcellularLocation>
</comment>
<comment type="similarity">
    <text evidence="1">Belongs to the ABC transporter superfamily. Macrolide exporter (TC 3.A.1.122) family.</text>
</comment>
<dbReference type="EC" id="7.6.2.-" evidence="1"/>
<dbReference type="EMBL" id="AL954747">
    <property type="protein sequence ID" value="CAD84992.1"/>
    <property type="molecule type" value="Genomic_DNA"/>
</dbReference>
<dbReference type="RefSeq" id="WP_011111680.1">
    <property type="nucleotide sequence ID" value="NC_004757.1"/>
</dbReference>
<dbReference type="SMR" id="Q82VK1"/>
<dbReference type="STRING" id="228410.NE1081"/>
<dbReference type="GeneID" id="87104266"/>
<dbReference type="KEGG" id="neu:NE1081"/>
<dbReference type="eggNOG" id="COG0577">
    <property type="taxonomic scope" value="Bacteria"/>
</dbReference>
<dbReference type="eggNOG" id="COG1136">
    <property type="taxonomic scope" value="Bacteria"/>
</dbReference>
<dbReference type="HOGENOM" id="CLU_000604_78_2_4"/>
<dbReference type="OrthoDB" id="4814201at2"/>
<dbReference type="PhylomeDB" id="Q82VK1"/>
<dbReference type="Proteomes" id="UP000001416">
    <property type="component" value="Chromosome"/>
</dbReference>
<dbReference type="GO" id="GO:0005886">
    <property type="term" value="C:plasma membrane"/>
    <property type="evidence" value="ECO:0007669"/>
    <property type="project" value="UniProtKB-SubCell"/>
</dbReference>
<dbReference type="GO" id="GO:0005524">
    <property type="term" value="F:ATP binding"/>
    <property type="evidence" value="ECO:0007669"/>
    <property type="project" value="UniProtKB-KW"/>
</dbReference>
<dbReference type="GO" id="GO:0016887">
    <property type="term" value="F:ATP hydrolysis activity"/>
    <property type="evidence" value="ECO:0007669"/>
    <property type="project" value="InterPro"/>
</dbReference>
<dbReference type="GO" id="GO:0022857">
    <property type="term" value="F:transmembrane transporter activity"/>
    <property type="evidence" value="ECO:0007669"/>
    <property type="project" value="TreeGrafter"/>
</dbReference>
<dbReference type="GO" id="GO:0046677">
    <property type="term" value="P:response to antibiotic"/>
    <property type="evidence" value="ECO:0007669"/>
    <property type="project" value="UniProtKB-KW"/>
</dbReference>
<dbReference type="CDD" id="cd03255">
    <property type="entry name" value="ABC_MJ0796_LolCDE_FtsE"/>
    <property type="match status" value="1"/>
</dbReference>
<dbReference type="FunFam" id="3.40.50.300:FF:000032">
    <property type="entry name" value="Export ABC transporter ATP-binding protein"/>
    <property type="match status" value="1"/>
</dbReference>
<dbReference type="Gene3D" id="3.40.50.300">
    <property type="entry name" value="P-loop containing nucleotide triphosphate hydrolases"/>
    <property type="match status" value="1"/>
</dbReference>
<dbReference type="InterPro" id="IPR003593">
    <property type="entry name" value="AAA+_ATPase"/>
</dbReference>
<dbReference type="InterPro" id="IPR003838">
    <property type="entry name" value="ABC3_permease_C"/>
</dbReference>
<dbReference type="InterPro" id="IPR003439">
    <property type="entry name" value="ABC_transporter-like_ATP-bd"/>
</dbReference>
<dbReference type="InterPro" id="IPR017871">
    <property type="entry name" value="ABC_transporter-like_CS"/>
</dbReference>
<dbReference type="InterPro" id="IPR017911">
    <property type="entry name" value="MacB-like_ATP-bd"/>
</dbReference>
<dbReference type="InterPro" id="IPR025857">
    <property type="entry name" value="MacB_PCD"/>
</dbReference>
<dbReference type="InterPro" id="IPR050250">
    <property type="entry name" value="Macrolide_Exporter_MacB"/>
</dbReference>
<dbReference type="InterPro" id="IPR027417">
    <property type="entry name" value="P-loop_NTPase"/>
</dbReference>
<dbReference type="PANTHER" id="PTHR30572:SF14">
    <property type="entry name" value="MACROLIDE EXPORT ATP-BINDING_PERMEASE PROTEIN MACB"/>
    <property type="match status" value="1"/>
</dbReference>
<dbReference type="PANTHER" id="PTHR30572">
    <property type="entry name" value="MEMBRANE COMPONENT OF TRANSPORTER-RELATED"/>
    <property type="match status" value="1"/>
</dbReference>
<dbReference type="Pfam" id="PF00005">
    <property type="entry name" value="ABC_tran"/>
    <property type="match status" value="1"/>
</dbReference>
<dbReference type="Pfam" id="PF02687">
    <property type="entry name" value="FtsX"/>
    <property type="match status" value="1"/>
</dbReference>
<dbReference type="Pfam" id="PF12704">
    <property type="entry name" value="MacB_PCD"/>
    <property type="match status" value="1"/>
</dbReference>
<dbReference type="SMART" id="SM00382">
    <property type="entry name" value="AAA"/>
    <property type="match status" value="1"/>
</dbReference>
<dbReference type="SUPFAM" id="SSF52540">
    <property type="entry name" value="P-loop containing nucleoside triphosphate hydrolases"/>
    <property type="match status" value="1"/>
</dbReference>
<dbReference type="PROSITE" id="PS00211">
    <property type="entry name" value="ABC_TRANSPORTER_1"/>
    <property type="match status" value="1"/>
</dbReference>
<dbReference type="PROSITE" id="PS50893">
    <property type="entry name" value="ABC_TRANSPORTER_2"/>
    <property type="match status" value="1"/>
</dbReference>
<dbReference type="PROSITE" id="PS51267">
    <property type="entry name" value="MACB"/>
    <property type="match status" value="1"/>
</dbReference>
<protein>
    <recommendedName>
        <fullName evidence="1">Macrolide export ATP-binding/permease protein MacB</fullName>
        <ecNumber evidence="1">7.6.2.-</ecNumber>
    </recommendedName>
</protein>